<keyword id="KW-0963">Cytoplasm</keyword>
<keyword id="KW-0328">Glycosyltransferase</keyword>
<keyword id="KW-0660">Purine salvage</keyword>
<keyword id="KW-0808">Transferase</keyword>
<comment type="function">
    <text evidence="1">Catalyzes a salvage reaction resulting in the formation of AMP, that is energically less costly than de novo synthesis.</text>
</comment>
<comment type="catalytic activity">
    <reaction evidence="1">
        <text>AMP + diphosphate = 5-phospho-alpha-D-ribose 1-diphosphate + adenine</text>
        <dbReference type="Rhea" id="RHEA:16609"/>
        <dbReference type="ChEBI" id="CHEBI:16708"/>
        <dbReference type="ChEBI" id="CHEBI:33019"/>
        <dbReference type="ChEBI" id="CHEBI:58017"/>
        <dbReference type="ChEBI" id="CHEBI:456215"/>
        <dbReference type="EC" id="2.4.2.7"/>
    </reaction>
</comment>
<comment type="pathway">
    <text evidence="1">Purine metabolism; AMP biosynthesis via salvage pathway; AMP from adenine: step 1/1.</text>
</comment>
<comment type="subunit">
    <text evidence="1">Homodimer.</text>
</comment>
<comment type="subcellular location">
    <subcellularLocation>
        <location evidence="1">Cytoplasm</location>
    </subcellularLocation>
</comment>
<comment type="similarity">
    <text evidence="1">Belongs to the purine/pyrimidine phosphoribosyltransferase family.</text>
</comment>
<evidence type="ECO:0000255" key="1">
    <source>
        <dbReference type="HAMAP-Rule" id="MF_00004"/>
    </source>
</evidence>
<proteinExistence type="inferred from homology"/>
<name>APT_ANAD2</name>
<protein>
    <recommendedName>
        <fullName evidence="1">Adenine phosphoribosyltransferase</fullName>
        <shortName evidence="1">APRT</shortName>
        <ecNumber evidence="1">2.4.2.7</ecNumber>
    </recommendedName>
</protein>
<accession>B8JDQ9</accession>
<reference key="1">
    <citation type="submission" date="2009-01" db="EMBL/GenBank/DDBJ databases">
        <title>Complete sequence of Anaeromyxobacter dehalogenans 2CP-1.</title>
        <authorList>
            <person name="Lucas S."/>
            <person name="Copeland A."/>
            <person name="Lapidus A."/>
            <person name="Glavina del Rio T."/>
            <person name="Dalin E."/>
            <person name="Tice H."/>
            <person name="Bruce D."/>
            <person name="Goodwin L."/>
            <person name="Pitluck S."/>
            <person name="Saunders E."/>
            <person name="Brettin T."/>
            <person name="Detter J.C."/>
            <person name="Han C."/>
            <person name="Larimer F."/>
            <person name="Land M."/>
            <person name="Hauser L."/>
            <person name="Kyrpides N."/>
            <person name="Ovchinnikova G."/>
            <person name="Beliaev A.S."/>
            <person name="Richardson P."/>
        </authorList>
    </citation>
    <scope>NUCLEOTIDE SEQUENCE [LARGE SCALE GENOMIC DNA]</scope>
    <source>
        <strain>2CP-1 / ATCC BAA-258</strain>
    </source>
</reference>
<dbReference type="EC" id="2.4.2.7" evidence="1"/>
<dbReference type="EMBL" id="CP001359">
    <property type="protein sequence ID" value="ACL64154.1"/>
    <property type="molecule type" value="Genomic_DNA"/>
</dbReference>
<dbReference type="RefSeq" id="WP_012524861.1">
    <property type="nucleotide sequence ID" value="NC_011891.1"/>
</dbReference>
<dbReference type="SMR" id="B8JDQ9"/>
<dbReference type="KEGG" id="acp:A2cp1_0802"/>
<dbReference type="HOGENOM" id="CLU_063339_3_0_7"/>
<dbReference type="UniPathway" id="UPA00588">
    <property type="reaction ID" value="UER00646"/>
</dbReference>
<dbReference type="Proteomes" id="UP000007089">
    <property type="component" value="Chromosome"/>
</dbReference>
<dbReference type="GO" id="GO:0005737">
    <property type="term" value="C:cytoplasm"/>
    <property type="evidence" value="ECO:0007669"/>
    <property type="project" value="UniProtKB-SubCell"/>
</dbReference>
<dbReference type="GO" id="GO:0002055">
    <property type="term" value="F:adenine binding"/>
    <property type="evidence" value="ECO:0007669"/>
    <property type="project" value="TreeGrafter"/>
</dbReference>
<dbReference type="GO" id="GO:0003999">
    <property type="term" value="F:adenine phosphoribosyltransferase activity"/>
    <property type="evidence" value="ECO:0007669"/>
    <property type="project" value="UniProtKB-UniRule"/>
</dbReference>
<dbReference type="GO" id="GO:0016208">
    <property type="term" value="F:AMP binding"/>
    <property type="evidence" value="ECO:0007669"/>
    <property type="project" value="TreeGrafter"/>
</dbReference>
<dbReference type="GO" id="GO:0006168">
    <property type="term" value="P:adenine salvage"/>
    <property type="evidence" value="ECO:0007669"/>
    <property type="project" value="InterPro"/>
</dbReference>
<dbReference type="GO" id="GO:0044209">
    <property type="term" value="P:AMP salvage"/>
    <property type="evidence" value="ECO:0007669"/>
    <property type="project" value="UniProtKB-UniRule"/>
</dbReference>
<dbReference type="GO" id="GO:0006166">
    <property type="term" value="P:purine ribonucleoside salvage"/>
    <property type="evidence" value="ECO:0007669"/>
    <property type="project" value="UniProtKB-KW"/>
</dbReference>
<dbReference type="CDD" id="cd06223">
    <property type="entry name" value="PRTases_typeI"/>
    <property type="match status" value="1"/>
</dbReference>
<dbReference type="FunFam" id="3.40.50.2020:FF:000021">
    <property type="entry name" value="Adenine phosphoribosyltransferase"/>
    <property type="match status" value="1"/>
</dbReference>
<dbReference type="Gene3D" id="3.40.50.2020">
    <property type="match status" value="1"/>
</dbReference>
<dbReference type="HAMAP" id="MF_00004">
    <property type="entry name" value="Aden_phosphoribosyltr"/>
    <property type="match status" value="1"/>
</dbReference>
<dbReference type="InterPro" id="IPR005764">
    <property type="entry name" value="Ade_phspho_trans"/>
</dbReference>
<dbReference type="InterPro" id="IPR000836">
    <property type="entry name" value="PRibTrfase_dom"/>
</dbReference>
<dbReference type="InterPro" id="IPR029057">
    <property type="entry name" value="PRTase-like"/>
</dbReference>
<dbReference type="InterPro" id="IPR050054">
    <property type="entry name" value="UPRTase/APRTase"/>
</dbReference>
<dbReference type="NCBIfam" id="TIGR01090">
    <property type="entry name" value="apt"/>
    <property type="match status" value="1"/>
</dbReference>
<dbReference type="NCBIfam" id="NF002634">
    <property type="entry name" value="PRK02304.1-3"/>
    <property type="match status" value="1"/>
</dbReference>
<dbReference type="NCBIfam" id="NF002636">
    <property type="entry name" value="PRK02304.1-5"/>
    <property type="match status" value="1"/>
</dbReference>
<dbReference type="PANTHER" id="PTHR32315">
    <property type="entry name" value="ADENINE PHOSPHORIBOSYLTRANSFERASE"/>
    <property type="match status" value="1"/>
</dbReference>
<dbReference type="PANTHER" id="PTHR32315:SF3">
    <property type="entry name" value="ADENINE PHOSPHORIBOSYLTRANSFERASE"/>
    <property type="match status" value="1"/>
</dbReference>
<dbReference type="Pfam" id="PF00156">
    <property type="entry name" value="Pribosyltran"/>
    <property type="match status" value="1"/>
</dbReference>
<dbReference type="SUPFAM" id="SSF53271">
    <property type="entry name" value="PRTase-like"/>
    <property type="match status" value="1"/>
</dbReference>
<dbReference type="PROSITE" id="PS00103">
    <property type="entry name" value="PUR_PYR_PR_TRANSFER"/>
    <property type="match status" value="1"/>
</dbReference>
<feature type="chain" id="PRO_1000116226" description="Adenine phosphoribosyltransferase">
    <location>
        <begin position="1"/>
        <end position="172"/>
    </location>
</feature>
<organism>
    <name type="scientific">Anaeromyxobacter dehalogenans (strain 2CP-1 / ATCC BAA-258)</name>
    <dbReference type="NCBI Taxonomy" id="455488"/>
    <lineage>
        <taxon>Bacteria</taxon>
        <taxon>Pseudomonadati</taxon>
        <taxon>Myxococcota</taxon>
        <taxon>Myxococcia</taxon>
        <taxon>Myxococcales</taxon>
        <taxon>Cystobacterineae</taxon>
        <taxon>Anaeromyxobacteraceae</taxon>
        <taxon>Anaeromyxobacter</taxon>
    </lineage>
</organism>
<sequence length="172" mass="18744">MMDAVRARIRDVPDFPKKGIVFKDITPVLSDPHTFREVIDAFVERWKGERVDKVIGIESRGFIFAAPIAYALGAGFTIVRKPGKLPWETIREVYALEYGEGALELHIDAIGPGDRVLVVDDVLATGGTAGAAGRLVVRQGAELLGYAFLAELSFLNGARQLGHAKVHSLLTF</sequence>
<gene>
    <name evidence="1" type="primary">apt</name>
    <name type="ordered locus">A2cp1_0802</name>
</gene>